<evidence type="ECO:0000255" key="1">
    <source>
        <dbReference type="HAMAP-Rule" id="MF_00038"/>
    </source>
</evidence>
<comment type="function">
    <text evidence="1">Catalyzes the initial step of the lipid cycle reactions in the biosynthesis of the cell wall peptidoglycan: transfers peptidoglycan precursor phospho-MurNAc-pentapeptide from UDP-MurNAc-pentapeptide onto the lipid carrier undecaprenyl phosphate, yielding undecaprenyl-pyrophosphoryl-MurNAc-pentapeptide, known as lipid I.</text>
</comment>
<comment type="catalytic activity">
    <reaction evidence="1">
        <text>UDP-N-acetyl-alpha-D-muramoyl-L-alanyl-gamma-D-glutamyl-meso-2,6-diaminopimeloyl-D-alanyl-D-alanine + di-trans,octa-cis-undecaprenyl phosphate = di-trans,octa-cis-undecaprenyl diphospho-N-acetyl-alpha-D-muramoyl-L-alanyl-D-glutamyl-meso-2,6-diaminopimeloyl-D-alanyl-D-alanine + UMP</text>
        <dbReference type="Rhea" id="RHEA:28386"/>
        <dbReference type="ChEBI" id="CHEBI:57865"/>
        <dbReference type="ChEBI" id="CHEBI:60392"/>
        <dbReference type="ChEBI" id="CHEBI:61386"/>
        <dbReference type="ChEBI" id="CHEBI:61387"/>
        <dbReference type="EC" id="2.7.8.13"/>
    </reaction>
</comment>
<comment type="cofactor">
    <cofactor evidence="1">
        <name>Mg(2+)</name>
        <dbReference type="ChEBI" id="CHEBI:18420"/>
    </cofactor>
</comment>
<comment type="pathway">
    <text evidence="1">Cell wall biogenesis; peptidoglycan biosynthesis.</text>
</comment>
<comment type="subcellular location">
    <subcellularLocation>
        <location evidence="1">Cell inner membrane</location>
        <topology evidence="1">Multi-pass membrane protein</topology>
    </subcellularLocation>
</comment>
<comment type="similarity">
    <text evidence="1">Belongs to the glycosyltransferase 4 family. MraY subfamily.</text>
</comment>
<gene>
    <name evidence="1" type="primary">mraY</name>
    <name type="ordered locus">YpsIP31758_3390</name>
</gene>
<sequence>MLVWLAEYLVKFYSGFNVFSYLTFRAIVSLLTALFISLWMGPHLIAWLQKLQIGQVVRNDGPESHFSKRGTPTMGGLMILFSITISVLMWAYPSNPYVWCVLFILIGYGIVGFIDDYRKVVRKNTKGLIARWKYFWQSIIALAAAFTMYSIGKDTSATELVVPFFKDIMPQLGLLYVLLAYFVIVGTSNAVNLTDGLDGLAIMPTVFVAAGFALVAWATGNVNFAAYLHIPYLRHAGELVIVCTAIVGAGLGFLWFNTYPAQVFMGDVGSLALGGALGTIAVLLRQEFLLVIMGGVFVVETLSVILQVGSFKLRGQRIFRMAPIHHHYELKGWPEPRVIVRFWIISLMLVLIGLATLKVR</sequence>
<feature type="chain" id="PRO_1000057286" description="Phospho-N-acetylmuramoyl-pentapeptide-transferase">
    <location>
        <begin position="1"/>
        <end position="360"/>
    </location>
</feature>
<feature type="transmembrane region" description="Helical" evidence="1">
    <location>
        <begin position="27"/>
        <end position="47"/>
    </location>
</feature>
<feature type="transmembrane region" description="Helical" evidence="1">
    <location>
        <begin position="72"/>
        <end position="92"/>
    </location>
</feature>
<feature type="transmembrane region" description="Helical" evidence="1">
    <location>
        <begin position="94"/>
        <end position="114"/>
    </location>
</feature>
<feature type="transmembrane region" description="Helical" evidence="1">
    <location>
        <begin position="132"/>
        <end position="152"/>
    </location>
</feature>
<feature type="transmembrane region" description="Helical" evidence="1">
    <location>
        <begin position="168"/>
        <end position="188"/>
    </location>
</feature>
<feature type="transmembrane region" description="Helical" evidence="1">
    <location>
        <begin position="199"/>
        <end position="219"/>
    </location>
</feature>
<feature type="transmembrane region" description="Helical" evidence="1">
    <location>
        <begin position="236"/>
        <end position="256"/>
    </location>
</feature>
<feature type="transmembrane region" description="Helical" evidence="1">
    <location>
        <begin position="263"/>
        <end position="283"/>
    </location>
</feature>
<feature type="transmembrane region" description="Helical" evidence="1">
    <location>
        <begin position="288"/>
        <end position="308"/>
    </location>
</feature>
<feature type="transmembrane region" description="Helical" evidence="1">
    <location>
        <begin position="338"/>
        <end position="358"/>
    </location>
</feature>
<name>MRAY_YERP3</name>
<proteinExistence type="inferred from homology"/>
<keyword id="KW-0131">Cell cycle</keyword>
<keyword id="KW-0132">Cell division</keyword>
<keyword id="KW-0997">Cell inner membrane</keyword>
<keyword id="KW-1003">Cell membrane</keyword>
<keyword id="KW-0133">Cell shape</keyword>
<keyword id="KW-0961">Cell wall biogenesis/degradation</keyword>
<keyword id="KW-0460">Magnesium</keyword>
<keyword id="KW-0472">Membrane</keyword>
<keyword id="KW-0479">Metal-binding</keyword>
<keyword id="KW-0573">Peptidoglycan synthesis</keyword>
<keyword id="KW-0808">Transferase</keyword>
<keyword id="KW-0812">Transmembrane</keyword>
<keyword id="KW-1133">Transmembrane helix</keyword>
<reference key="1">
    <citation type="journal article" date="2007" name="PLoS Genet.">
        <title>The complete genome sequence of Yersinia pseudotuberculosis IP31758, the causative agent of Far East scarlet-like fever.</title>
        <authorList>
            <person name="Eppinger M."/>
            <person name="Rosovitz M.J."/>
            <person name="Fricke W.F."/>
            <person name="Rasko D.A."/>
            <person name="Kokorina G."/>
            <person name="Fayolle C."/>
            <person name="Lindler L.E."/>
            <person name="Carniel E."/>
            <person name="Ravel J."/>
        </authorList>
    </citation>
    <scope>NUCLEOTIDE SEQUENCE [LARGE SCALE GENOMIC DNA]</scope>
    <source>
        <strain>IP 31758</strain>
    </source>
</reference>
<protein>
    <recommendedName>
        <fullName evidence="1">Phospho-N-acetylmuramoyl-pentapeptide-transferase</fullName>
        <ecNumber evidence="1">2.7.8.13</ecNumber>
    </recommendedName>
    <alternativeName>
        <fullName evidence="1">UDP-MurNAc-pentapeptide phosphotransferase</fullName>
    </alternativeName>
</protein>
<dbReference type="EC" id="2.7.8.13" evidence="1"/>
<dbReference type="EMBL" id="CP000720">
    <property type="protein sequence ID" value="ABS47178.1"/>
    <property type="molecule type" value="Genomic_DNA"/>
</dbReference>
<dbReference type="RefSeq" id="WP_002210437.1">
    <property type="nucleotide sequence ID" value="NC_009708.1"/>
</dbReference>
<dbReference type="SMR" id="A7FM69"/>
<dbReference type="GeneID" id="57974063"/>
<dbReference type="KEGG" id="ypi:YpsIP31758_3390"/>
<dbReference type="HOGENOM" id="CLU_023982_0_0_6"/>
<dbReference type="UniPathway" id="UPA00219"/>
<dbReference type="Proteomes" id="UP000002412">
    <property type="component" value="Chromosome"/>
</dbReference>
<dbReference type="GO" id="GO:0005886">
    <property type="term" value="C:plasma membrane"/>
    <property type="evidence" value="ECO:0007669"/>
    <property type="project" value="UniProtKB-SubCell"/>
</dbReference>
<dbReference type="GO" id="GO:0046872">
    <property type="term" value="F:metal ion binding"/>
    <property type="evidence" value="ECO:0007669"/>
    <property type="project" value="UniProtKB-KW"/>
</dbReference>
<dbReference type="GO" id="GO:0008963">
    <property type="term" value="F:phospho-N-acetylmuramoyl-pentapeptide-transferase activity"/>
    <property type="evidence" value="ECO:0007669"/>
    <property type="project" value="UniProtKB-UniRule"/>
</dbReference>
<dbReference type="GO" id="GO:0051992">
    <property type="term" value="F:UDP-N-acetylmuramoyl-L-alanyl-D-glutamyl-meso-2,6-diaminopimelyl-D-alanyl-D-alanine:undecaprenyl-phosphate transferase activity"/>
    <property type="evidence" value="ECO:0007669"/>
    <property type="project" value="RHEA"/>
</dbReference>
<dbReference type="GO" id="GO:0051301">
    <property type="term" value="P:cell division"/>
    <property type="evidence" value="ECO:0007669"/>
    <property type="project" value="UniProtKB-KW"/>
</dbReference>
<dbReference type="GO" id="GO:0071555">
    <property type="term" value="P:cell wall organization"/>
    <property type="evidence" value="ECO:0007669"/>
    <property type="project" value="UniProtKB-KW"/>
</dbReference>
<dbReference type="GO" id="GO:0009252">
    <property type="term" value="P:peptidoglycan biosynthetic process"/>
    <property type="evidence" value="ECO:0007669"/>
    <property type="project" value="UniProtKB-UniRule"/>
</dbReference>
<dbReference type="GO" id="GO:0008360">
    <property type="term" value="P:regulation of cell shape"/>
    <property type="evidence" value="ECO:0007669"/>
    <property type="project" value="UniProtKB-KW"/>
</dbReference>
<dbReference type="CDD" id="cd06852">
    <property type="entry name" value="GT_MraY"/>
    <property type="match status" value="1"/>
</dbReference>
<dbReference type="HAMAP" id="MF_00038">
    <property type="entry name" value="MraY"/>
    <property type="match status" value="1"/>
</dbReference>
<dbReference type="InterPro" id="IPR000715">
    <property type="entry name" value="Glycosyl_transferase_4"/>
</dbReference>
<dbReference type="InterPro" id="IPR003524">
    <property type="entry name" value="PNAcMuramoyl-5peptid_Trfase"/>
</dbReference>
<dbReference type="InterPro" id="IPR018480">
    <property type="entry name" value="PNAcMuramoyl-5peptid_Trfase_CS"/>
</dbReference>
<dbReference type="NCBIfam" id="TIGR00445">
    <property type="entry name" value="mraY"/>
    <property type="match status" value="1"/>
</dbReference>
<dbReference type="PANTHER" id="PTHR22926">
    <property type="entry name" value="PHOSPHO-N-ACETYLMURAMOYL-PENTAPEPTIDE-TRANSFERASE"/>
    <property type="match status" value="1"/>
</dbReference>
<dbReference type="PANTHER" id="PTHR22926:SF5">
    <property type="entry name" value="PHOSPHO-N-ACETYLMURAMOYL-PENTAPEPTIDE-TRANSFERASE HOMOLOG"/>
    <property type="match status" value="1"/>
</dbReference>
<dbReference type="Pfam" id="PF00953">
    <property type="entry name" value="Glycos_transf_4"/>
    <property type="match status" value="1"/>
</dbReference>
<dbReference type="Pfam" id="PF10555">
    <property type="entry name" value="MraY_sig1"/>
    <property type="match status" value="1"/>
</dbReference>
<dbReference type="PROSITE" id="PS01347">
    <property type="entry name" value="MRAY_1"/>
    <property type="match status" value="1"/>
</dbReference>
<dbReference type="PROSITE" id="PS01348">
    <property type="entry name" value="MRAY_2"/>
    <property type="match status" value="1"/>
</dbReference>
<organism>
    <name type="scientific">Yersinia pseudotuberculosis serotype O:1b (strain IP 31758)</name>
    <dbReference type="NCBI Taxonomy" id="349747"/>
    <lineage>
        <taxon>Bacteria</taxon>
        <taxon>Pseudomonadati</taxon>
        <taxon>Pseudomonadota</taxon>
        <taxon>Gammaproteobacteria</taxon>
        <taxon>Enterobacterales</taxon>
        <taxon>Yersiniaceae</taxon>
        <taxon>Yersinia</taxon>
    </lineage>
</organism>
<accession>A7FM69</accession>